<sequence length="302" mass="35503">MKIFTSKKGQLSQLKQQKFKLEKDIQRLFEENLTLLSGYIFIRSEFSIKNSRIDTLAFDPETQAFVIIEYKRQQNSSVVDQGISYLNLMLEYKADFIVEYNEKQKVPLKRNDVDWSQSKVIFVSPAFNDFQIQATNFKDLPIELWEVNRFDNDIITLNIINKSKSAPNIKAVSNEKREEFSILKEIKVYQESDHLADKTDFIQELYEDFKQGILNLDPDIEINTRKLYIAFKKDRNIADIRIQQKNLKIWINLPYGELDDPKNLAKNVSNTGHWGNGDYEITIESTQYLEYIMSLIKQAIKD</sequence>
<proteinExistence type="predicted"/>
<name>Y1375_HAEIN</name>
<reference key="1">
    <citation type="journal article" date="1995" name="Science">
        <title>Whole-genome random sequencing and assembly of Haemophilus influenzae Rd.</title>
        <authorList>
            <person name="Fleischmann R.D."/>
            <person name="Adams M.D."/>
            <person name="White O."/>
            <person name="Clayton R.A."/>
            <person name="Kirkness E.F."/>
            <person name="Kerlavage A.R."/>
            <person name="Bult C.J."/>
            <person name="Tomb J.-F."/>
            <person name="Dougherty B.A."/>
            <person name="Merrick J.M."/>
            <person name="McKenney K."/>
            <person name="Sutton G.G."/>
            <person name="FitzHugh W."/>
            <person name="Fields C.A."/>
            <person name="Gocayne J.D."/>
            <person name="Scott J.D."/>
            <person name="Shirley R."/>
            <person name="Liu L.-I."/>
            <person name="Glodek A."/>
            <person name="Kelley J.M."/>
            <person name="Weidman J.F."/>
            <person name="Phillips C.A."/>
            <person name="Spriggs T."/>
            <person name="Hedblom E."/>
            <person name="Cotton M.D."/>
            <person name="Utterback T.R."/>
            <person name="Hanna M.C."/>
            <person name="Nguyen D.T."/>
            <person name="Saudek D.M."/>
            <person name="Brandon R.C."/>
            <person name="Fine L.D."/>
            <person name="Fritchman J.L."/>
            <person name="Fuhrmann J.L."/>
            <person name="Geoghagen N.S.M."/>
            <person name="Gnehm C.L."/>
            <person name="McDonald L.A."/>
            <person name="Small K.V."/>
            <person name="Fraser C.M."/>
            <person name="Smith H.O."/>
            <person name="Venter J.C."/>
        </authorList>
    </citation>
    <scope>NUCLEOTIDE SEQUENCE [LARGE SCALE GENOMIC DNA]</scope>
    <source>
        <strain>ATCC 51907 / DSM 11121 / KW20 / Rd</strain>
    </source>
</reference>
<gene>
    <name type="ordered locus">HI_1375</name>
</gene>
<dbReference type="EMBL" id="L42023">
    <property type="protein sequence ID" value="AAC23029.1"/>
    <property type="molecule type" value="Genomic_DNA"/>
</dbReference>
<dbReference type="PIR" id="H64026">
    <property type="entry name" value="H64026"/>
</dbReference>
<dbReference type="RefSeq" id="NP_439527.1">
    <property type="nucleotide sequence ID" value="NC_000907.1"/>
</dbReference>
<dbReference type="SMR" id="P44169"/>
<dbReference type="STRING" id="71421.HI_1375"/>
<dbReference type="DNASU" id="950817"/>
<dbReference type="EnsemblBacteria" id="AAC23029">
    <property type="protein sequence ID" value="AAC23029"/>
    <property type="gene ID" value="HI_1375"/>
</dbReference>
<dbReference type="KEGG" id="hin:HI_1375"/>
<dbReference type="PATRIC" id="fig|71421.8.peg.1430"/>
<dbReference type="eggNOG" id="COG3586">
    <property type="taxonomic scope" value="Bacteria"/>
</dbReference>
<dbReference type="HOGENOM" id="CLU_080101_0_0_6"/>
<dbReference type="OrthoDB" id="9798761at2"/>
<dbReference type="PhylomeDB" id="P44169"/>
<dbReference type="BioCyc" id="HINF71421:G1GJ1-1401-MONOMER"/>
<dbReference type="Proteomes" id="UP000000579">
    <property type="component" value="Chromosome"/>
</dbReference>
<dbReference type="GO" id="GO:0003676">
    <property type="term" value="F:nucleic acid binding"/>
    <property type="evidence" value="ECO:0007669"/>
    <property type="project" value="InterPro"/>
</dbReference>
<dbReference type="Gene3D" id="3.40.1350.10">
    <property type="match status" value="1"/>
</dbReference>
<dbReference type="InterPro" id="IPR043714">
    <property type="entry name" value="DUF5655"/>
</dbReference>
<dbReference type="InterPro" id="IPR011856">
    <property type="entry name" value="tRNA_endonuc-like_dom_sf"/>
</dbReference>
<dbReference type="Pfam" id="PF18899">
    <property type="entry name" value="DUF5655"/>
    <property type="match status" value="1"/>
</dbReference>
<accession>P44169</accession>
<keyword id="KW-1185">Reference proteome</keyword>
<organism>
    <name type="scientific">Haemophilus influenzae (strain ATCC 51907 / DSM 11121 / KW20 / Rd)</name>
    <dbReference type="NCBI Taxonomy" id="71421"/>
    <lineage>
        <taxon>Bacteria</taxon>
        <taxon>Pseudomonadati</taxon>
        <taxon>Pseudomonadota</taxon>
        <taxon>Gammaproteobacteria</taxon>
        <taxon>Pasteurellales</taxon>
        <taxon>Pasteurellaceae</taxon>
        <taxon>Haemophilus</taxon>
    </lineage>
</organism>
<protein>
    <recommendedName>
        <fullName>Uncharacterized protein HI_1375</fullName>
    </recommendedName>
</protein>
<feature type="chain" id="PRO_0000078032" description="Uncharacterized protein HI_1375">
    <location>
        <begin position="1"/>
        <end position="302"/>
    </location>
</feature>